<reference key="1">
    <citation type="journal article" date="1995" name="Yeast">
        <title>Sequence of a 9.8 kb segment of yeast chromosome II including the three genes of the MAL3 locus and three unidentified open reading frames.</title>
        <authorList>
            <person name="Feuermann M."/>
            <person name="Charbonnel L."/>
            <person name="De Montigny J."/>
            <person name="Bloch J.C."/>
            <person name="Potier S."/>
            <person name="Souciet J.-L."/>
        </authorList>
    </citation>
    <scope>NUCLEOTIDE SEQUENCE [GENOMIC DNA]</scope>
    <source>
        <strain>ATCC 204508 / S288c</strain>
    </source>
</reference>
<reference key="2">
    <citation type="journal article" date="1994" name="EMBO J.">
        <title>Complete DNA sequence of yeast chromosome II.</title>
        <authorList>
            <person name="Feldmann H."/>
            <person name="Aigle M."/>
            <person name="Aljinovic G."/>
            <person name="Andre B."/>
            <person name="Baclet M.C."/>
            <person name="Barthe C."/>
            <person name="Baur A."/>
            <person name="Becam A.-M."/>
            <person name="Biteau N."/>
            <person name="Boles E."/>
            <person name="Brandt T."/>
            <person name="Brendel M."/>
            <person name="Brueckner M."/>
            <person name="Bussereau F."/>
            <person name="Christiansen C."/>
            <person name="Contreras R."/>
            <person name="Crouzet M."/>
            <person name="Cziepluch C."/>
            <person name="Demolis N."/>
            <person name="Delaveau T."/>
            <person name="Doignon F."/>
            <person name="Domdey H."/>
            <person name="Duesterhus S."/>
            <person name="Dubois E."/>
            <person name="Dujon B."/>
            <person name="El Bakkoury M."/>
            <person name="Entian K.-D."/>
            <person name="Feuermann M."/>
            <person name="Fiers W."/>
            <person name="Fobo G.M."/>
            <person name="Fritz C."/>
            <person name="Gassenhuber J."/>
            <person name="Glansdorff N."/>
            <person name="Goffeau A."/>
            <person name="Grivell L.A."/>
            <person name="de Haan M."/>
            <person name="Hein C."/>
            <person name="Herbert C.J."/>
            <person name="Hollenberg C.P."/>
            <person name="Holmstroem K."/>
            <person name="Jacq C."/>
            <person name="Jacquet M."/>
            <person name="Jauniaux J.-C."/>
            <person name="Jonniaux J.-L."/>
            <person name="Kallesoee T."/>
            <person name="Kiesau P."/>
            <person name="Kirchrath L."/>
            <person name="Koetter P."/>
            <person name="Korol S."/>
            <person name="Liebl S."/>
            <person name="Logghe M."/>
            <person name="Lohan A.J.E."/>
            <person name="Louis E.J."/>
            <person name="Li Z.Y."/>
            <person name="Maat M.J."/>
            <person name="Mallet L."/>
            <person name="Mannhaupt G."/>
            <person name="Messenguy F."/>
            <person name="Miosga T."/>
            <person name="Molemans F."/>
            <person name="Mueller S."/>
            <person name="Nasr F."/>
            <person name="Obermaier B."/>
            <person name="Perea J."/>
            <person name="Pierard A."/>
            <person name="Piravandi E."/>
            <person name="Pohl F.M."/>
            <person name="Pohl T.M."/>
            <person name="Potier S."/>
            <person name="Proft M."/>
            <person name="Purnelle B."/>
            <person name="Ramezani Rad M."/>
            <person name="Rieger M."/>
            <person name="Rose M."/>
            <person name="Schaaff-Gerstenschlaeger I."/>
            <person name="Scherens B."/>
            <person name="Schwarzlose C."/>
            <person name="Skala J."/>
            <person name="Slonimski P.P."/>
            <person name="Smits P.H.M."/>
            <person name="Souciet J.-L."/>
            <person name="Steensma H.Y."/>
            <person name="Stucka R."/>
            <person name="Urrestarazu L.A."/>
            <person name="van der Aart Q.J.M."/>
            <person name="Van Dyck L."/>
            <person name="Vassarotti A."/>
            <person name="Vetter I."/>
            <person name="Vierendeels F."/>
            <person name="Vissers S."/>
            <person name="Wagner G."/>
            <person name="de Wergifosse P."/>
            <person name="Wolfe K.H."/>
            <person name="Zagulski M."/>
            <person name="Zimmermann F.K."/>
            <person name="Mewes H.-W."/>
            <person name="Kleine K."/>
        </authorList>
    </citation>
    <scope>NUCLEOTIDE SEQUENCE [LARGE SCALE GENOMIC DNA]</scope>
    <source>
        <strain>ATCC 204508 / S288c</strain>
    </source>
</reference>
<reference key="3">
    <citation type="journal article" date="2014" name="G3 (Bethesda)">
        <title>The reference genome sequence of Saccharomyces cerevisiae: Then and now.</title>
        <authorList>
            <person name="Engel S.R."/>
            <person name="Dietrich F.S."/>
            <person name="Fisk D.G."/>
            <person name="Binkley G."/>
            <person name="Balakrishnan R."/>
            <person name="Costanzo M.C."/>
            <person name="Dwight S.S."/>
            <person name="Hitz B.C."/>
            <person name="Karra K."/>
            <person name="Nash R.S."/>
            <person name="Weng S."/>
            <person name="Wong E.D."/>
            <person name="Lloyd P."/>
            <person name="Skrzypek M.S."/>
            <person name="Miyasato S.R."/>
            <person name="Simison M."/>
            <person name="Cherry J.M."/>
        </authorList>
    </citation>
    <scope>GENOME REANNOTATION</scope>
    <source>
        <strain>ATCC 204508 / S288c</strain>
    </source>
</reference>
<reference key="4">
    <citation type="journal article" date="2007" name="Genome Res.">
        <title>Approaching a complete repository of sequence-verified protein-encoding clones for Saccharomyces cerevisiae.</title>
        <authorList>
            <person name="Hu Y."/>
            <person name="Rolfs A."/>
            <person name="Bhullar B."/>
            <person name="Murthy T.V.S."/>
            <person name="Zhu C."/>
            <person name="Berger M.F."/>
            <person name="Camargo A.A."/>
            <person name="Kelley F."/>
            <person name="McCarron S."/>
            <person name="Jepson D."/>
            <person name="Richardson A."/>
            <person name="Raphael J."/>
            <person name="Moreira D."/>
            <person name="Taycher E."/>
            <person name="Zuo D."/>
            <person name="Mohr S."/>
            <person name="Kane M.F."/>
            <person name="Williamson J."/>
            <person name="Simpson A.J.G."/>
            <person name="Bulyk M.L."/>
            <person name="Harlow E."/>
            <person name="Marsischky G."/>
            <person name="Kolodner R.D."/>
            <person name="LaBaer J."/>
        </authorList>
    </citation>
    <scope>NUCLEOTIDE SEQUENCE [GENOMIC DNA]</scope>
    <source>
        <strain>ATCC 204508 / S288c</strain>
    </source>
</reference>
<reference key="5">
    <citation type="journal article" date="2001" name="J. Bacteriol.">
        <title>Reciprocal regulation of anaerobic and aerobic cell wall mannoprotein gene expression in Saccharomyces cerevisiae.</title>
        <authorList>
            <person name="Abramova N.E."/>
            <person name="Sertil O."/>
            <person name="Mehta S."/>
            <person name="Lowry C.V."/>
        </authorList>
    </citation>
    <scope>INDUCTION</scope>
</reference>
<reference key="6">
    <citation type="journal article" date="2001" name="Nucleic Acids Res.">
        <title>Induction and repression of DAN1 and the family of anaerobic mannoprotein genes in Saccharomyces cerevisiae occurs through a complex array of regulatory sites.</title>
        <authorList>
            <person name="Cohen B.D."/>
            <person name="Sertil O."/>
            <person name="Abramova N.E."/>
            <person name="Davies K.J.A."/>
            <person name="Lowry C.V."/>
        </authorList>
    </citation>
    <scope>INDUCTION</scope>
</reference>
<gene>
    <name type="primary">PAU24</name>
    <name type="synonym">DAN3</name>
    <name type="ordered locus">YBR301W</name>
    <name type="ORF">YBR2120A</name>
</gene>
<comment type="function">
    <text evidence="1">Component of the cell wall.</text>
</comment>
<comment type="subcellular location">
    <subcellularLocation>
        <location evidence="1">Secreted</location>
        <location evidence="1">Cell wall</location>
    </subcellularLocation>
</comment>
<comment type="induction">
    <text evidence="3 4">Induced during anaerobic growth and completely repressed during aerobic growth.</text>
</comment>
<comment type="PTM">
    <text evidence="1">O-glycosylated.</text>
</comment>
<comment type="similarity">
    <text evidence="5">Belongs to the SRP1/TIP1 family. Seripauperin subfamily.</text>
</comment>
<proteinExistence type="evidence at transcript level"/>
<evidence type="ECO:0000250" key="1"/>
<evidence type="ECO:0000255" key="2"/>
<evidence type="ECO:0000269" key="3">
    <source>
    </source>
</evidence>
<evidence type="ECO:0000269" key="4">
    <source>
    </source>
</evidence>
<evidence type="ECO:0000305" key="5"/>
<keyword id="KW-0134">Cell wall</keyword>
<keyword id="KW-0961">Cell wall biogenesis/degradation</keyword>
<keyword id="KW-0325">Glycoprotein</keyword>
<keyword id="KW-1185">Reference proteome</keyword>
<keyword id="KW-0964">Secreted</keyword>
<keyword id="KW-0732">Signal</keyword>
<name>PAU24_YEAST</name>
<dbReference type="EMBL" id="Z36169">
    <property type="protein sequence ID" value="CAA85266.1"/>
    <property type="molecule type" value="Genomic_DNA"/>
</dbReference>
<dbReference type="EMBL" id="AY693110">
    <property type="protein sequence ID" value="AAT93129.1"/>
    <property type="molecule type" value="Genomic_DNA"/>
</dbReference>
<dbReference type="EMBL" id="BK006936">
    <property type="protein sequence ID" value="DAA07416.1"/>
    <property type="molecule type" value="Genomic_DNA"/>
</dbReference>
<dbReference type="PIR" id="S46185">
    <property type="entry name" value="S46185"/>
</dbReference>
<dbReference type="RefSeq" id="NP_009860.3">
    <property type="nucleotide sequence ID" value="NM_001178649.3"/>
</dbReference>
<dbReference type="BioGRID" id="32993">
    <property type="interactions" value="31"/>
</dbReference>
<dbReference type="DIP" id="DIP-4497N"/>
<dbReference type="FunCoup" id="P38155">
    <property type="interactions" value="30"/>
</dbReference>
<dbReference type="IntAct" id="P38155">
    <property type="interactions" value="2"/>
</dbReference>
<dbReference type="STRING" id="4932.YBR301W"/>
<dbReference type="PaxDb" id="4932-YBR301W"/>
<dbReference type="EnsemblFungi" id="YBR301W_mRNA">
    <property type="protein sequence ID" value="YBR301W"/>
    <property type="gene ID" value="YBR301W"/>
</dbReference>
<dbReference type="GeneID" id="852603"/>
<dbReference type="KEGG" id="sce:YBR301W"/>
<dbReference type="AGR" id="SGD:S000000505"/>
<dbReference type="SGD" id="S000000505">
    <property type="gene designation" value="PAU24"/>
</dbReference>
<dbReference type="VEuPathDB" id="FungiDB:YBR301W"/>
<dbReference type="eggNOG" id="ENOG502SR1B">
    <property type="taxonomic scope" value="Eukaryota"/>
</dbReference>
<dbReference type="GeneTree" id="ENSGT00940000176276"/>
<dbReference type="HOGENOM" id="CLU_136376_0_0_1"/>
<dbReference type="InParanoid" id="P38155"/>
<dbReference type="OMA" id="QVAHPTE"/>
<dbReference type="OrthoDB" id="4059055at2759"/>
<dbReference type="BioCyc" id="YEAST:G3O-29217-MONOMER"/>
<dbReference type="PRO" id="PR:P38155"/>
<dbReference type="Proteomes" id="UP000002311">
    <property type="component" value="Chromosome II"/>
</dbReference>
<dbReference type="RNAct" id="P38155">
    <property type="molecule type" value="protein"/>
</dbReference>
<dbReference type="GO" id="GO:0005576">
    <property type="term" value="C:extracellular region"/>
    <property type="evidence" value="ECO:0007669"/>
    <property type="project" value="UniProtKB-KW"/>
</dbReference>
<dbReference type="GO" id="GO:0009277">
    <property type="term" value="C:fungal-type cell wall"/>
    <property type="evidence" value="ECO:0000250"/>
    <property type="project" value="SGD"/>
</dbReference>
<dbReference type="GO" id="GO:0005199">
    <property type="term" value="F:structural constituent of cell wall"/>
    <property type="evidence" value="ECO:0000318"/>
    <property type="project" value="GO_Central"/>
</dbReference>
<dbReference type="GO" id="GO:0031505">
    <property type="term" value="P:fungal-type cell wall organization"/>
    <property type="evidence" value="ECO:0000318"/>
    <property type="project" value="GO_Central"/>
</dbReference>
<dbReference type="InterPro" id="IPR000992">
    <property type="entry name" value="SRP1_TIP1"/>
</dbReference>
<dbReference type="InterPro" id="IPR050788">
    <property type="entry name" value="Yeast_SRP1/TIP1_CWP"/>
</dbReference>
<dbReference type="PANTHER" id="PTHR31002:SF34">
    <property type="entry name" value="CELL WALL PROTEIN CWP1-RELATED"/>
    <property type="match status" value="1"/>
</dbReference>
<dbReference type="PANTHER" id="PTHR31002">
    <property type="entry name" value="SERIPAUPERIN"/>
    <property type="match status" value="1"/>
</dbReference>
<dbReference type="Pfam" id="PF00660">
    <property type="entry name" value="SRP1_TIP1"/>
    <property type="match status" value="1"/>
</dbReference>
<dbReference type="PROSITE" id="PS00724">
    <property type="entry name" value="SRP1_TIP1"/>
    <property type="match status" value="1"/>
</dbReference>
<protein>
    <recommendedName>
        <fullName>Seripauperin-24</fullName>
    </recommendedName>
    <alternativeName>
        <fullName>Cell wall protein DAN3</fullName>
    </alternativeName>
    <alternativeName>
        <fullName>Delayed anaerobic protein 3</fullName>
    </alternativeName>
</protein>
<organism>
    <name type="scientific">Saccharomyces cerevisiae (strain ATCC 204508 / S288c)</name>
    <name type="common">Baker's yeast</name>
    <dbReference type="NCBI Taxonomy" id="559292"/>
    <lineage>
        <taxon>Eukaryota</taxon>
        <taxon>Fungi</taxon>
        <taxon>Dikarya</taxon>
        <taxon>Ascomycota</taxon>
        <taxon>Saccharomycotina</taxon>
        <taxon>Saccharomycetes</taxon>
        <taxon>Saccharomycetales</taxon>
        <taxon>Saccharomycetaceae</taxon>
        <taxon>Saccharomyces</taxon>
    </lineage>
</organism>
<sequence>MVKLTSIAAGVAAIAATASATTTLAQSDERVNLVELGVYVSDIRAHLAQYYSFQVAHPTETYPVEIAEAVFNYGDFTTMLTGIAPDQVTRMITGVPWYSSRLKPAISSALSKDGIYTIAN</sequence>
<accession>P38155</accession>
<accession>D6VQU6</accession>
<feature type="signal peptide" evidence="2">
    <location>
        <begin position="1"/>
        <end position="20"/>
    </location>
</feature>
<feature type="chain" id="PRO_0000033242" description="Seripauperin-24">
    <location>
        <begin position="21"/>
        <end position="120"/>
    </location>
</feature>